<gene>
    <name evidence="1" type="primary">ygiB</name>
    <name type="ordered locus">SEN3030</name>
</gene>
<accession>B5QZ24</accession>
<protein>
    <recommendedName>
        <fullName evidence="1">UPF0441 protein YgiB</fullName>
    </recommendedName>
</protein>
<proteinExistence type="inferred from homology"/>
<organism>
    <name type="scientific">Salmonella enteritidis PT4 (strain P125109)</name>
    <dbReference type="NCBI Taxonomy" id="550537"/>
    <lineage>
        <taxon>Bacteria</taxon>
        <taxon>Pseudomonadati</taxon>
        <taxon>Pseudomonadota</taxon>
        <taxon>Gammaproteobacteria</taxon>
        <taxon>Enterobacterales</taxon>
        <taxon>Enterobacteriaceae</taxon>
        <taxon>Salmonella</taxon>
    </lineage>
</organism>
<feature type="chain" id="PRO_1000138349" description="UPF0441 protein YgiB">
    <location>
        <begin position="1"/>
        <end position="223"/>
    </location>
</feature>
<feature type="region of interest" description="Disordered" evidence="2">
    <location>
        <begin position="178"/>
        <end position="223"/>
    </location>
</feature>
<feature type="compositionally biased region" description="Low complexity" evidence="2">
    <location>
        <begin position="178"/>
        <end position="195"/>
    </location>
</feature>
<feature type="compositionally biased region" description="Polar residues" evidence="2">
    <location>
        <begin position="204"/>
        <end position="223"/>
    </location>
</feature>
<comment type="similarity">
    <text evidence="1">Belongs to the UPF0441 family.</text>
</comment>
<sequence length="223" mass="23373">MKRTKSIHHASFRKSWSARHLTPVALAVTAVFMLAGCEKSDDTVSLYQNADDCSAANPGKSAECTTAYNNALKEAERTAPKYATREDCVAEFGEGQCQQAPAQAGMAPENQAQAQQSSGSFWMPLMAGYMMGRLMGGGAGFAQQPLFSSKNPASPAYGKYTDAAGKNYGAAQPGRTMTVPKTAMAPKPATTTTVTRGGFGESVAKQSTMQRSAAGTSTRSMGG</sequence>
<name>YGIB_SALEP</name>
<dbReference type="EMBL" id="AM933172">
    <property type="protein sequence ID" value="CAR34606.1"/>
    <property type="molecule type" value="Genomic_DNA"/>
</dbReference>
<dbReference type="RefSeq" id="WP_000831522.1">
    <property type="nucleotide sequence ID" value="NC_011294.1"/>
</dbReference>
<dbReference type="KEGG" id="set:SEN3030"/>
<dbReference type="HOGENOM" id="CLU_095624_0_0_6"/>
<dbReference type="Proteomes" id="UP000000613">
    <property type="component" value="Chromosome"/>
</dbReference>
<dbReference type="HAMAP" id="MF_01188">
    <property type="entry name" value="UPF0441"/>
    <property type="match status" value="1"/>
</dbReference>
<dbReference type="InterPro" id="IPR009576">
    <property type="entry name" value="Biofilm_formation_YgiB"/>
</dbReference>
<dbReference type="NCBIfam" id="NF008655">
    <property type="entry name" value="PRK11653.1"/>
    <property type="match status" value="1"/>
</dbReference>
<dbReference type="Pfam" id="PF06693">
    <property type="entry name" value="DUF1190"/>
    <property type="match status" value="1"/>
</dbReference>
<reference key="1">
    <citation type="journal article" date="2008" name="Genome Res.">
        <title>Comparative genome analysis of Salmonella enteritidis PT4 and Salmonella gallinarum 287/91 provides insights into evolutionary and host adaptation pathways.</title>
        <authorList>
            <person name="Thomson N.R."/>
            <person name="Clayton D.J."/>
            <person name="Windhorst D."/>
            <person name="Vernikos G."/>
            <person name="Davidson S."/>
            <person name="Churcher C."/>
            <person name="Quail M.A."/>
            <person name="Stevens M."/>
            <person name="Jones M.A."/>
            <person name="Watson M."/>
            <person name="Barron A."/>
            <person name="Layton A."/>
            <person name="Pickard D."/>
            <person name="Kingsley R.A."/>
            <person name="Bignell A."/>
            <person name="Clark L."/>
            <person name="Harris B."/>
            <person name="Ormond D."/>
            <person name="Abdellah Z."/>
            <person name="Brooks K."/>
            <person name="Cherevach I."/>
            <person name="Chillingworth T."/>
            <person name="Woodward J."/>
            <person name="Norberczak H."/>
            <person name="Lord A."/>
            <person name="Arrowsmith C."/>
            <person name="Jagels K."/>
            <person name="Moule S."/>
            <person name="Mungall K."/>
            <person name="Saunders M."/>
            <person name="Whitehead S."/>
            <person name="Chabalgoity J.A."/>
            <person name="Maskell D."/>
            <person name="Humphreys T."/>
            <person name="Roberts M."/>
            <person name="Barrow P.A."/>
            <person name="Dougan G."/>
            <person name="Parkhill J."/>
        </authorList>
    </citation>
    <scope>NUCLEOTIDE SEQUENCE [LARGE SCALE GENOMIC DNA]</scope>
    <source>
        <strain>P125109</strain>
    </source>
</reference>
<evidence type="ECO:0000255" key="1">
    <source>
        <dbReference type="HAMAP-Rule" id="MF_01188"/>
    </source>
</evidence>
<evidence type="ECO:0000256" key="2">
    <source>
        <dbReference type="SAM" id="MobiDB-lite"/>
    </source>
</evidence>